<feature type="chain" id="PRO_0000187782" description="Peptidyl-tRNA hydrolase">
    <location>
        <begin position="1"/>
        <end position="192"/>
    </location>
</feature>
<feature type="active site" description="Proton acceptor" evidence="1">
    <location>
        <position position="23"/>
    </location>
</feature>
<feature type="binding site" evidence="1">
    <location>
        <position position="18"/>
    </location>
    <ligand>
        <name>tRNA</name>
        <dbReference type="ChEBI" id="CHEBI:17843"/>
    </ligand>
</feature>
<feature type="binding site" evidence="1">
    <location>
        <position position="69"/>
    </location>
    <ligand>
        <name>tRNA</name>
        <dbReference type="ChEBI" id="CHEBI:17843"/>
    </ligand>
</feature>
<feature type="binding site" evidence="1">
    <location>
        <position position="71"/>
    </location>
    <ligand>
        <name>tRNA</name>
        <dbReference type="ChEBI" id="CHEBI:17843"/>
    </ligand>
</feature>
<feature type="binding site" evidence="1">
    <location>
        <position position="117"/>
    </location>
    <ligand>
        <name>tRNA</name>
        <dbReference type="ChEBI" id="CHEBI:17843"/>
    </ligand>
</feature>
<feature type="site" description="Discriminates between blocked and unblocked aminoacyl-tRNA" evidence="1">
    <location>
        <position position="13"/>
    </location>
</feature>
<feature type="site" description="Stabilizes the basic form of H active site to accept a proton" evidence="1">
    <location>
        <position position="96"/>
    </location>
</feature>
<keyword id="KW-0963">Cytoplasm</keyword>
<keyword id="KW-0378">Hydrolase</keyword>
<keyword id="KW-0694">RNA-binding</keyword>
<keyword id="KW-0820">tRNA-binding</keyword>
<evidence type="ECO:0000255" key="1">
    <source>
        <dbReference type="HAMAP-Rule" id="MF_00083"/>
    </source>
</evidence>
<reference key="1">
    <citation type="journal article" date="2000" name="Nature">
        <title>Complete DNA sequence of a serogroup A strain of Neisseria meningitidis Z2491.</title>
        <authorList>
            <person name="Parkhill J."/>
            <person name="Achtman M."/>
            <person name="James K.D."/>
            <person name="Bentley S.D."/>
            <person name="Churcher C.M."/>
            <person name="Klee S.R."/>
            <person name="Morelli G."/>
            <person name="Basham D."/>
            <person name="Brown D."/>
            <person name="Chillingworth T."/>
            <person name="Davies R.M."/>
            <person name="Davis P."/>
            <person name="Devlin K."/>
            <person name="Feltwell T."/>
            <person name="Hamlin N."/>
            <person name="Holroyd S."/>
            <person name="Jagels K."/>
            <person name="Leather S."/>
            <person name="Moule S."/>
            <person name="Mungall K.L."/>
            <person name="Quail M.A."/>
            <person name="Rajandream M.A."/>
            <person name="Rutherford K.M."/>
            <person name="Simmonds M."/>
            <person name="Skelton J."/>
            <person name="Whitehead S."/>
            <person name="Spratt B.G."/>
            <person name="Barrell B.G."/>
        </authorList>
    </citation>
    <scope>NUCLEOTIDE SEQUENCE [LARGE SCALE GENOMIC DNA]</scope>
    <source>
        <strain>DSM 15465 / Z2491</strain>
    </source>
</reference>
<proteinExistence type="inferred from homology"/>
<accession>Q9JV42</accession>
<accession>A1IR43</accession>
<gene>
    <name evidence="1" type="primary">pth</name>
    <name type="ordered locus">NMA1004</name>
</gene>
<name>PTH_NEIMA</name>
<organism>
    <name type="scientific">Neisseria meningitidis serogroup A / serotype 4A (strain DSM 15465 / Z2491)</name>
    <dbReference type="NCBI Taxonomy" id="122587"/>
    <lineage>
        <taxon>Bacteria</taxon>
        <taxon>Pseudomonadati</taxon>
        <taxon>Pseudomonadota</taxon>
        <taxon>Betaproteobacteria</taxon>
        <taxon>Neisseriales</taxon>
        <taxon>Neisseriaceae</taxon>
        <taxon>Neisseria</taxon>
    </lineage>
</organism>
<sequence>MSNTIKMVVGLGNPGKEYEQTRHNAGFWFLDELAWKWKASFKEEKKFFGEVARATLPDGDVWLLKPTTFMNRSGQAVAALAQFYKIKPEEILVVHDELDIPCGRIKFKLGGGNGGHNGLKDIQAKLGTADYYRLRLGIGHPGDRNLVVGYVLNKPSTEHRRQIDDAVAKSLQAIPDILAGKCEEATRFLHSK</sequence>
<dbReference type="EC" id="3.1.1.29" evidence="1"/>
<dbReference type="EMBL" id="AL157959">
    <property type="protein sequence ID" value="CAM08227.1"/>
    <property type="molecule type" value="Genomic_DNA"/>
</dbReference>
<dbReference type="PIR" id="B81948">
    <property type="entry name" value="B81948"/>
</dbReference>
<dbReference type="RefSeq" id="WP_002246101.1">
    <property type="nucleotide sequence ID" value="NC_003116.1"/>
</dbReference>
<dbReference type="SMR" id="Q9JV42"/>
<dbReference type="EnsemblBacteria" id="CAM08227">
    <property type="protein sequence ID" value="CAM08227"/>
    <property type="gene ID" value="NMA1004"/>
</dbReference>
<dbReference type="GeneID" id="93386377"/>
<dbReference type="KEGG" id="nma:NMA1004"/>
<dbReference type="HOGENOM" id="CLU_062456_3_1_4"/>
<dbReference type="Proteomes" id="UP000000626">
    <property type="component" value="Chromosome"/>
</dbReference>
<dbReference type="GO" id="GO:0005737">
    <property type="term" value="C:cytoplasm"/>
    <property type="evidence" value="ECO:0007669"/>
    <property type="project" value="UniProtKB-SubCell"/>
</dbReference>
<dbReference type="GO" id="GO:0004045">
    <property type="term" value="F:peptidyl-tRNA hydrolase activity"/>
    <property type="evidence" value="ECO:0007669"/>
    <property type="project" value="UniProtKB-UniRule"/>
</dbReference>
<dbReference type="GO" id="GO:0000049">
    <property type="term" value="F:tRNA binding"/>
    <property type="evidence" value="ECO:0007669"/>
    <property type="project" value="UniProtKB-UniRule"/>
</dbReference>
<dbReference type="GO" id="GO:0006515">
    <property type="term" value="P:protein quality control for misfolded or incompletely synthesized proteins"/>
    <property type="evidence" value="ECO:0007669"/>
    <property type="project" value="UniProtKB-UniRule"/>
</dbReference>
<dbReference type="GO" id="GO:0072344">
    <property type="term" value="P:rescue of stalled ribosome"/>
    <property type="evidence" value="ECO:0007669"/>
    <property type="project" value="UniProtKB-UniRule"/>
</dbReference>
<dbReference type="CDD" id="cd00462">
    <property type="entry name" value="PTH"/>
    <property type="match status" value="1"/>
</dbReference>
<dbReference type="FunFam" id="3.40.50.1470:FF:000001">
    <property type="entry name" value="Peptidyl-tRNA hydrolase"/>
    <property type="match status" value="1"/>
</dbReference>
<dbReference type="Gene3D" id="3.40.50.1470">
    <property type="entry name" value="Peptidyl-tRNA hydrolase"/>
    <property type="match status" value="1"/>
</dbReference>
<dbReference type="HAMAP" id="MF_00083">
    <property type="entry name" value="Pept_tRNA_hydro_bact"/>
    <property type="match status" value="1"/>
</dbReference>
<dbReference type="InterPro" id="IPR001328">
    <property type="entry name" value="Pept_tRNA_hydro"/>
</dbReference>
<dbReference type="InterPro" id="IPR018171">
    <property type="entry name" value="Pept_tRNA_hydro_CS"/>
</dbReference>
<dbReference type="InterPro" id="IPR036416">
    <property type="entry name" value="Pept_tRNA_hydro_sf"/>
</dbReference>
<dbReference type="NCBIfam" id="TIGR00447">
    <property type="entry name" value="pth"/>
    <property type="match status" value="1"/>
</dbReference>
<dbReference type="PANTHER" id="PTHR17224">
    <property type="entry name" value="PEPTIDYL-TRNA HYDROLASE"/>
    <property type="match status" value="1"/>
</dbReference>
<dbReference type="PANTHER" id="PTHR17224:SF1">
    <property type="entry name" value="PEPTIDYL-TRNA HYDROLASE"/>
    <property type="match status" value="1"/>
</dbReference>
<dbReference type="Pfam" id="PF01195">
    <property type="entry name" value="Pept_tRNA_hydro"/>
    <property type="match status" value="1"/>
</dbReference>
<dbReference type="SUPFAM" id="SSF53178">
    <property type="entry name" value="Peptidyl-tRNA hydrolase-like"/>
    <property type="match status" value="1"/>
</dbReference>
<dbReference type="PROSITE" id="PS01195">
    <property type="entry name" value="PEPT_TRNA_HYDROL_1"/>
    <property type="match status" value="1"/>
</dbReference>
<dbReference type="PROSITE" id="PS01196">
    <property type="entry name" value="PEPT_TRNA_HYDROL_2"/>
    <property type="match status" value="1"/>
</dbReference>
<protein>
    <recommendedName>
        <fullName evidence="1">Peptidyl-tRNA hydrolase</fullName>
        <shortName evidence="1">Pth</shortName>
        <ecNumber evidence="1">3.1.1.29</ecNumber>
    </recommendedName>
</protein>
<comment type="function">
    <text evidence="1">Hydrolyzes ribosome-free peptidyl-tRNAs (with 1 or more amino acids incorporated), which drop off the ribosome during protein synthesis, or as a result of ribosome stalling.</text>
</comment>
<comment type="function">
    <text evidence="1">Catalyzes the release of premature peptidyl moieties from peptidyl-tRNA molecules trapped in stalled 50S ribosomal subunits, and thus maintains levels of free tRNAs and 50S ribosomes.</text>
</comment>
<comment type="catalytic activity">
    <reaction evidence="1">
        <text>an N-acyl-L-alpha-aminoacyl-tRNA + H2O = an N-acyl-L-amino acid + a tRNA + H(+)</text>
        <dbReference type="Rhea" id="RHEA:54448"/>
        <dbReference type="Rhea" id="RHEA-COMP:10123"/>
        <dbReference type="Rhea" id="RHEA-COMP:13883"/>
        <dbReference type="ChEBI" id="CHEBI:15377"/>
        <dbReference type="ChEBI" id="CHEBI:15378"/>
        <dbReference type="ChEBI" id="CHEBI:59874"/>
        <dbReference type="ChEBI" id="CHEBI:78442"/>
        <dbReference type="ChEBI" id="CHEBI:138191"/>
        <dbReference type="EC" id="3.1.1.29"/>
    </reaction>
</comment>
<comment type="subunit">
    <text evidence="1">Monomer.</text>
</comment>
<comment type="subcellular location">
    <subcellularLocation>
        <location evidence="1">Cytoplasm</location>
    </subcellularLocation>
</comment>
<comment type="similarity">
    <text evidence="1">Belongs to the PTH family.</text>
</comment>